<protein>
    <recommendedName>
        <fullName evidence="26">Tumor suppressor ARF</fullName>
    </recommendedName>
    <alternativeName>
        <fullName evidence="25">Alternative reading frame</fullName>
        <shortName evidence="25">ARF</shortName>
    </alternativeName>
    <alternativeName>
        <fullName evidence="32">Cyclin-dependent kinase inhibitor 2A</fullName>
    </alternativeName>
    <alternativeName>
        <fullName evidence="25">p14ARF</fullName>
    </alternativeName>
</protein>
<keyword id="KW-0025">Alternative splicing</keyword>
<keyword id="KW-0053">Apoptosis</keyword>
<keyword id="KW-0131">Cell cycle</keyword>
<keyword id="KW-0238">DNA-binding</keyword>
<keyword id="KW-0496">Mitochondrion</keyword>
<keyword id="KW-0539">Nucleus</keyword>
<keyword id="KW-1267">Proteomics identification</keyword>
<keyword id="KW-1185">Reference proteome</keyword>
<keyword id="KW-0698">rRNA processing</keyword>
<keyword id="KW-0804">Transcription</keyword>
<keyword id="KW-0805">Transcription regulation</keyword>
<keyword id="KW-0043">Tumor suppressor</keyword>
<keyword id="KW-0832">Ubl conjugation</keyword>
<keyword id="KW-0833">Ubl conjugation pathway</keyword>
<name>ARF_HUMAN</name>
<sequence length="132" mass="13903">MVRRFLVTLRIRRACGPPRVRVFVVHIPRLTGEWAAPGAPAAVALVLMLLRSQRLGQQPLPRRPGHDDGQRPSGGAAAAPRRGAQLRRPRHSHPTRARRCPGGLPGHAGGAAPGRGAAGRARCLGPSARGPG</sequence>
<gene>
    <name evidence="30 32" type="primary">CDKN2A</name>
    <name evidence="29" type="synonym">CDKN2</name>
    <name type="synonym">MLM</name>
</gene>
<proteinExistence type="evidence at protein level"/>
<feature type="chain" id="PRO_0000144180" description="Tumor suppressor ARF">
    <location>
        <begin position="1"/>
        <end position="132"/>
    </location>
</feature>
<feature type="region of interest" description="Interaction with CDK5RAP3 and MDM2" evidence="14">
    <location>
        <begin position="1"/>
        <end position="64"/>
    </location>
</feature>
<feature type="region of interest" description="Disordered" evidence="2">
    <location>
        <begin position="56"/>
        <end position="132"/>
    </location>
</feature>
<feature type="compositionally biased region" description="Low complexity" evidence="2">
    <location>
        <begin position="71"/>
        <end position="83"/>
    </location>
</feature>
<feature type="compositionally biased region" description="Basic residues" evidence="2">
    <location>
        <begin position="84"/>
        <end position="99"/>
    </location>
</feature>
<feature type="compositionally biased region" description="Gly residues" evidence="2">
    <location>
        <begin position="103"/>
        <end position="117"/>
    </location>
</feature>
<feature type="splice variant" id="VSP_044962" description="In isoform smARF." evidence="26">
    <location>
        <begin position="1"/>
        <end position="47"/>
    </location>
</feature>
<feature type="sequence variant" id="VAR_029287" description="In dbSNP:rs3731190." evidence="23">
    <original>P</original>
    <variation>S</variation>
    <location>
        <position position="17"/>
    </location>
</feature>
<feature type="sequence variant" id="VAR_053033" description="In dbSNP:rs4987127.">
    <original>G</original>
    <variation>R</variation>
    <location>
        <position position="106"/>
    </location>
</feature>
<feature type="sequence variant" id="VAR_053034" description="In dbSNP:rs34886500.">
    <original>P</original>
    <variation>L</variation>
    <location>
        <position position="113"/>
    </location>
</feature>
<feature type="sequence variant" id="VAR_053035" description="In dbSNP:rs35741010.">
    <original>G</original>
    <variation>D</variation>
    <location>
        <position position="116"/>
    </location>
</feature>
<feature type="sequence conflict" description="In Ref. 6; AAH15960/AAH21998 and 7; AAP35666." evidence="26" ref="6 7">
    <original>PRL</original>
    <variation>SWF</variation>
    <location>
        <begin position="28"/>
        <end position="30"/>
    </location>
</feature>
<feature type="sequence conflict" description="In Ref. 2; AAB01737." evidence="26" ref="2">
    <original>P</original>
    <variation>L</variation>
    <location>
        <position position="94"/>
    </location>
</feature>
<organism>
    <name type="scientific">Homo sapiens</name>
    <name type="common">Human</name>
    <dbReference type="NCBI Taxonomy" id="9606"/>
    <lineage>
        <taxon>Eukaryota</taxon>
        <taxon>Metazoa</taxon>
        <taxon>Chordata</taxon>
        <taxon>Craniata</taxon>
        <taxon>Vertebrata</taxon>
        <taxon>Euteleostomi</taxon>
        <taxon>Mammalia</taxon>
        <taxon>Eutheria</taxon>
        <taxon>Euarchontoglires</taxon>
        <taxon>Primates</taxon>
        <taxon>Haplorrhini</taxon>
        <taxon>Catarrhini</taxon>
        <taxon>Hominidae</taxon>
        <taxon>Homo</taxon>
    </lineage>
</organism>
<dbReference type="EMBL" id="S78535">
    <property type="protein sequence ID" value="AAC60649.1"/>
    <property type="status" value="ALT_INIT"/>
    <property type="molecule type" value="mRNA"/>
</dbReference>
<dbReference type="EMBL" id="U38945">
    <property type="protein sequence ID" value="AAB01737.1"/>
    <property type="status" value="ALT_INIT"/>
    <property type="molecule type" value="mRNA"/>
</dbReference>
<dbReference type="EMBL" id="AF527803">
    <property type="protein sequence ID" value="AAM77919.1"/>
    <property type="status" value="ALT_INIT"/>
    <property type="molecule type" value="Genomic_DNA"/>
</dbReference>
<dbReference type="EMBL" id="AL449423">
    <property type="protein sequence ID" value="CAH70601.1"/>
    <property type="status" value="ALT_INIT"/>
    <property type="molecule type" value="Genomic_DNA"/>
</dbReference>
<dbReference type="EMBL" id="CH471071">
    <property type="protein sequence ID" value="EAW58600.1"/>
    <property type="status" value="ALT_INIT"/>
    <property type="molecule type" value="Genomic_DNA"/>
</dbReference>
<dbReference type="EMBL" id="CH471071">
    <property type="protein sequence ID" value="EAW58601.1"/>
    <property type="status" value="ALT_INIT"/>
    <property type="molecule type" value="Genomic_DNA"/>
</dbReference>
<dbReference type="EMBL" id="BC015960">
    <property type="protein sequence ID" value="AAH15960.3"/>
    <property type="status" value="ALT_INIT"/>
    <property type="molecule type" value="mRNA"/>
</dbReference>
<dbReference type="EMBL" id="BC021998">
    <property type="protein sequence ID" value="AAH21998.3"/>
    <property type="status" value="ALT_INIT"/>
    <property type="molecule type" value="mRNA"/>
</dbReference>
<dbReference type="EMBL" id="U26727">
    <property type="protein sequence ID" value="AAA82236.1"/>
    <property type="molecule type" value="mRNA"/>
</dbReference>
<dbReference type="EMBL" id="BT007020">
    <property type="protein sequence ID" value="AAP35666.1"/>
    <property type="molecule type" value="mRNA"/>
</dbReference>
<dbReference type="CCDS" id="CCDS6511.2">
    <molecule id="Q8N726-1"/>
</dbReference>
<dbReference type="PIR" id="I39004">
    <property type="entry name" value="I39004"/>
</dbReference>
<dbReference type="RefSeq" id="NP_478102.2">
    <molecule id="Q8N726-1"/>
    <property type="nucleotide sequence ID" value="NM_058195.4"/>
</dbReference>
<dbReference type="BioGRID" id="107463">
    <property type="interactions" value="340"/>
</dbReference>
<dbReference type="CORUM" id="Q8N726"/>
<dbReference type="DIP" id="DIP-24171N"/>
<dbReference type="IntAct" id="Q8N726">
    <property type="interactions" value="70"/>
</dbReference>
<dbReference type="MINT" id="Q8N726"/>
<dbReference type="iPTMnet" id="Q8N726"/>
<dbReference type="PhosphoSitePlus" id="Q8N726"/>
<dbReference type="BioMuta" id="CDKN2A"/>
<dbReference type="DMDM" id="384872321"/>
<dbReference type="jPOST" id="Q8N726"/>
<dbReference type="MassIVE" id="Q8N726"/>
<dbReference type="PeptideAtlas" id="Q8N726"/>
<dbReference type="ProteomicsDB" id="72258">
    <molecule id="Q8N726-1"/>
</dbReference>
<dbReference type="Pumba" id="Q8N726"/>
<dbReference type="Antibodypedia" id="3608">
    <property type="antibodies" value="1716 antibodies from 55 providers"/>
</dbReference>
<dbReference type="DNASU" id="1029"/>
<dbReference type="Ensembl" id="ENST00000530628.2">
    <molecule id="Q8N726-1"/>
    <property type="protein sequence ID" value="ENSP00000432664.2"/>
    <property type="gene ID" value="ENSG00000147889.18"/>
</dbReference>
<dbReference type="Ensembl" id="ENST00000579755.2">
    <molecule id="Q8N726-1"/>
    <property type="protein sequence ID" value="ENSP00000462950.1"/>
    <property type="gene ID" value="ENSG00000147889.18"/>
</dbReference>
<dbReference type="GeneID" id="1029"/>
<dbReference type="UCSC" id="uc003zpl.4">
    <molecule id="Q8N726-1"/>
    <property type="organism name" value="human"/>
</dbReference>
<dbReference type="AGR" id="HGNC:1787"/>
<dbReference type="CTD" id="1029"/>
<dbReference type="DisGeNET" id="1029"/>
<dbReference type="GeneCards" id="CDKN2A"/>
<dbReference type="HGNC" id="HGNC:1787">
    <property type="gene designation" value="CDKN2A"/>
</dbReference>
<dbReference type="HPA" id="ENSG00000147889">
    <property type="expression patterns" value="Tissue enhanced (choroid plexus, pituitary gland)"/>
</dbReference>
<dbReference type="MalaCards" id="CDKN2A"/>
<dbReference type="MIM" id="600160">
    <property type="type" value="gene"/>
</dbReference>
<dbReference type="neXtProt" id="NX_Q8N726"/>
<dbReference type="OpenTargets" id="ENSG00000147889"/>
<dbReference type="PharmGKB" id="PA106"/>
<dbReference type="VEuPathDB" id="HostDB:ENSG00000147889"/>
<dbReference type="GeneTree" id="ENSGT00940000163078"/>
<dbReference type="HOGENOM" id="CLU_134503_0_0_1"/>
<dbReference type="OrthoDB" id="539213at2759"/>
<dbReference type="PathwayCommons" id="Q8N726"/>
<dbReference type="Reactome" id="R-HSA-111471">
    <property type="pathway name" value="Apoptotic factor-mediated response"/>
</dbReference>
<dbReference type="Reactome" id="R-HSA-2559580">
    <property type="pathway name" value="Oxidative Stress Induced Senescence"/>
</dbReference>
<dbReference type="Reactome" id="R-HSA-2559585">
    <property type="pathway name" value="Oncogene Induced Senescence"/>
</dbReference>
<dbReference type="Reactome" id="R-HSA-3108214">
    <property type="pathway name" value="SUMOylation of DNA damage response and repair proteins"/>
</dbReference>
<dbReference type="Reactome" id="R-HSA-3232118">
    <property type="pathway name" value="SUMOylation of transcription factors"/>
</dbReference>
<dbReference type="Reactome" id="R-HSA-6804757">
    <property type="pathway name" value="Regulation of TP53 Degradation"/>
</dbReference>
<dbReference type="Reactome" id="R-HSA-69541">
    <property type="pathway name" value="Stabilization of p53"/>
</dbReference>
<dbReference type="Reactome" id="R-HSA-8941858">
    <property type="pathway name" value="Regulation of RUNX3 expression and activity"/>
</dbReference>
<dbReference type="Reactome" id="R-HSA-9645722">
    <property type="pathway name" value="Defective Intrinsic Pathway for Apoptosis Due to p14ARF Loss of Function"/>
</dbReference>
<dbReference type="Reactome" id="R-HSA-9646303">
    <property type="pathway name" value="Evasion of Oncogene Induced Senescence Due to p14ARF Defects"/>
</dbReference>
<dbReference type="Reactome" id="R-HSA-9646304">
    <property type="pathway name" value="Evasion of Oxidative Stress Induced Senescence Due to p14ARF Defects"/>
</dbReference>
<dbReference type="Reactome" id="R-HSA-9759194">
    <property type="pathway name" value="Nuclear events mediated by NFE2L2"/>
</dbReference>
<dbReference type="SignaLink" id="Q8N726"/>
<dbReference type="SIGNOR" id="Q8N726"/>
<dbReference type="BioGRID-ORCS" id="1029">
    <property type="hits" value="29 hits in 1179 CRISPR screens"/>
</dbReference>
<dbReference type="CD-CODE" id="91857CE7">
    <property type="entry name" value="Nucleolus"/>
</dbReference>
<dbReference type="ChiTaRS" id="CDKN2A">
    <property type="organism name" value="human"/>
</dbReference>
<dbReference type="GenomeRNAi" id="1029"/>
<dbReference type="Pharos" id="Q8N726">
    <property type="development level" value="Tbio"/>
</dbReference>
<dbReference type="Proteomes" id="UP000005640">
    <property type="component" value="Chromosome 9"/>
</dbReference>
<dbReference type="Bgee" id="ENSG00000147889">
    <property type="expression patterns" value="Expressed in parotid gland and 174 other cell types or tissues"/>
</dbReference>
<dbReference type="ExpressionAtlas" id="Q8N726">
    <property type="expression patterns" value="baseline and differential"/>
</dbReference>
<dbReference type="GO" id="GO:0005829">
    <property type="term" value="C:cytosol"/>
    <property type="evidence" value="ECO:0000304"/>
    <property type="project" value="Reactome"/>
</dbReference>
<dbReference type="GO" id="GO:0005759">
    <property type="term" value="C:mitochondrial matrix"/>
    <property type="evidence" value="ECO:0000304"/>
    <property type="project" value="Reactome"/>
</dbReference>
<dbReference type="GO" id="GO:0005739">
    <property type="term" value="C:mitochondrion"/>
    <property type="evidence" value="ECO:0000315"/>
    <property type="project" value="ParkinsonsUK-UCL"/>
</dbReference>
<dbReference type="GO" id="GO:0005730">
    <property type="term" value="C:nucleolus"/>
    <property type="evidence" value="ECO:0000314"/>
    <property type="project" value="UniProtKB"/>
</dbReference>
<dbReference type="GO" id="GO:0005654">
    <property type="term" value="C:nucleoplasm"/>
    <property type="evidence" value="ECO:0000314"/>
    <property type="project" value="BHF-UCL"/>
</dbReference>
<dbReference type="GO" id="GO:0005634">
    <property type="term" value="C:nucleus"/>
    <property type="evidence" value="ECO:0000314"/>
    <property type="project" value="BHF-UCL"/>
</dbReference>
<dbReference type="GO" id="GO:0032991">
    <property type="term" value="C:protein-containing complex"/>
    <property type="evidence" value="ECO:0000314"/>
    <property type="project" value="BHF-UCL"/>
</dbReference>
<dbReference type="GO" id="GO:0097718">
    <property type="term" value="F:disordered domain specific binding"/>
    <property type="evidence" value="ECO:0000353"/>
    <property type="project" value="CAFA"/>
</dbReference>
<dbReference type="GO" id="GO:0003677">
    <property type="term" value="F:DNA binding"/>
    <property type="evidence" value="ECO:0007669"/>
    <property type="project" value="UniProtKB-KW"/>
</dbReference>
<dbReference type="GO" id="GO:0097371">
    <property type="term" value="F:MDM2/MDM4 family protein binding"/>
    <property type="evidence" value="ECO:0000353"/>
    <property type="project" value="UniProtKB"/>
</dbReference>
<dbReference type="GO" id="GO:0002039">
    <property type="term" value="F:p53 binding"/>
    <property type="evidence" value="ECO:0000353"/>
    <property type="project" value="BHF-UCL"/>
</dbReference>
<dbReference type="GO" id="GO:0061629">
    <property type="term" value="F:RNA polymerase II-specific DNA-binding transcription factor binding"/>
    <property type="evidence" value="ECO:0000353"/>
    <property type="project" value="BHF-UCL"/>
</dbReference>
<dbReference type="GO" id="GO:0019789">
    <property type="term" value="F:SUMO transferase activity"/>
    <property type="evidence" value="ECO:0000269"/>
    <property type="project" value="Reactome"/>
</dbReference>
<dbReference type="GO" id="GO:1990948">
    <property type="term" value="F:ubiquitin ligase inhibitor activity"/>
    <property type="evidence" value="ECO:0000314"/>
    <property type="project" value="CAFA"/>
</dbReference>
<dbReference type="GO" id="GO:0055105">
    <property type="term" value="F:ubiquitin-protein transferase inhibitor activity"/>
    <property type="evidence" value="ECO:0000250"/>
    <property type="project" value="BHF-UCL"/>
</dbReference>
<dbReference type="GO" id="GO:1990000">
    <property type="term" value="P:amyloid fibril formation"/>
    <property type="evidence" value="ECO:0000314"/>
    <property type="project" value="DisProt"/>
</dbReference>
<dbReference type="GO" id="GO:0097190">
    <property type="term" value="P:apoptotic signaling pathway"/>
    <property type="evidence" value="ECO:0000315"/>
    <property type="project" value="BHF-UCL"/>
</dbReference>
<dbReference type="GO" id="GO:0000422">
    <property type="term" value="P:autophagy of mitochondrion"/>
    <property type="evidence" value="ECO:0000315"/>
    <property type="project" value="ParkinsonsUK-UCL"/>
</dbReference>
<dbReference type="GO" id="GO:0090398">
    <property type="term" value="P:cellular senescence"/>
    <property type="evidence" value="ECO:0000315"/>
    <property type="project" value="BHF-UCL"/>
</dbReference>
<dbReference type="GO" id="GO:0051882">
    <property type="term" value="P:mitochondrial depolarization"/>
    <property type="evidence" value="ECO:0000315"/>
    <property type="project" value="ParkinsonsUK-UCL"/>
</dbReference>
<dbReference type="GO" id="GO:0030889">
    <property type="term" value="P:negative regulation of B cell proliferation"/>
    <property type="evidence" value="ECO:0000250"/>
    <property type="project" value="BHF-UCL"/>
</dbReference>
<dbReference type="GO" id="GO:0008285">
    <property type="term" value="P:negative regulation of cell population proliferation"/>
    <property type="evidence" value="ECO:0000314"/>
    <property type="project" value="UniProtKB"/>
</dbReference>
<dbReference type="GO" id="GO:0033088">
    <property type="term" value="P:negative regulation of immature T cell proliferation in thymus"/>
    <property type="evidence" value="ECO:0000250"/>
    <property type="project" value="BHF-UCL"/>
</dbReference>
<dbReference type="GO" id="GO:2000435">
    <property type="term" value="P:negative regulation of protein neddylation"/>
    <property type="evidence" value="ECO:0000314"/>
    <property type="project" value="CAFA"/>
</dbReference>
<dbReference type="GO" id="GO:1903051">
    <property type="term" value="P:negative regulation of proteolysis involved in protein catabolic process"/>
    <property type="evidence" value="ECO:0000315"/>
    <property type="project" value="ParkinsonsUK-UCL"/>
</dbReference>
<dbReference type="GO" id="GO:1904667">
    <property type="term" value="P:negative regulation of ubiquitin protein ligase activity"/>
    <property type="evidence" value="ECO:0000314"/>
    <property type="project" value="CAFA"/>
</dbReference>
<dbReference type="GO" id="GO:2000059">
    <property type="term" value="P:negative regulation of ubiquitin-dependent protein catabolic process"/>
    <property type="evidence" value="ECO:0000314"/>
    <property type="project" value="CAFA"/>
</dbReference>
<dbReference type="GO" id="GO:0051444">
    <property type="term" value="P:negative regulation of ubiquitin-protein transferase activity"/>
    <property type="evidence" value="ECO:0000250"/>
    <property type="project" value="BHF-UCL"/>
</dbReference>
<dbReference type="GO" id="GO:0030575">
    <property type="term" value="P:nuclear body organization"/>
    <property type="evidence" value="ECO:0000269"/>
    <property type="project" value="DisProt"/>
</dbReference>
<dbReference type="GO" id="GO:0043065">
    <property type="term" value="P:positive regulation of apoptotic process"/>
    <property type="evidence" value="ECO:0000315"/>
    <property type="project" value="UniProtKB"/>
</dbReference>
<dbReference type="GO" id="GO:0043517">
    <property type="term" value="P:positive regulation of DNA damage response, signal transduction by p53 class mediator"/>
    <property type="evidence" value="ECO:0000314"/>
    <property type="project" value="BHF-UCL"/>
</dbReference>
<dbReference type="GO" id="GO:0045893">
    <property type="term" value="P:positive regulation of DNA-templated transcription"/>
    <property type="evidence" value="ECO:0000314"/>
    <property type="project" value="UniProtKB"/>
</dbReference>
<dbReference type="GO" id="GO:0010628">
    <property type="term" value="P:positive regulation of gene expression"/>
    <property type="evidence" value="ECO:0000314"/>
    <property type="project" value="CAFA"/>
</dbReference>
<dbReference type="GO" id="GO:1900182">
    <property type="term" value="P:positive regulation of protein localization to nucleus"/>
    <property type="evidence" value="ECO:0000314"/>
    <property type="project" value="UniProtKB"/>
</dbReference>
<dbReference type="GO" id="GO:0033235">
    <property type="term" value="P:positive regulation of protein sumoylation"/>
    <property type="evidence" value="ECO:0000315"/>
    <property type="project" value="BHF-UCL"/>
</dbReference>
<dbReference type="GO" id="GO:1901798">
    <property type="term" value="P:positive regulation of signal transduction by p53 class mediator"/>
    <property type="evidence" value="ECO:0000314"/>
    <property type="project" value="UniProtKB"/>
</dbReference>
<dbReference type="GO" id="GO:0045944">
    <property type="term" value="P:positive regulation of transcription by RNA polymerase II"/>
    <property type="evidence" value="ECO:0000314"/>
    <property type="project" value="UniProtKB"/>
</dbReference>
<dbReference type="GO" id="GO:0031648">
    <property type="term" value="P:protein destabilization"/>
    <property type="evidence" value="ECO:0000314"/>
    <property type="project" value="BHF-UCL"/>
</dbReference>
<dbReference type="GO" id="GO:0070534">
    <property type="term" value="P:protein K63-linked ubiquitination"/>
    <property type="evidence" value="ECO:0000314"/>
    <property type="project" value="UniProtKB"/>
</dbReference>
<dbReference type="GO" id="GO:1902570">
    <property type="term" value="P:protein localization to nucleolus"/>
    <property type="evidence" value="ECO:0000269"/>
    <property type="project" value="DisProt"/>
</dbReference>
<dbReference type="GO" id="GO:0034504">
    <property type="term" value="P:protein localization to nucleus"/>
    <property type="evidence" value="ECO:0000314"/>
    <property type="project" value="DisProt"/>
</dbReference>
<dbReference type="GO" id="GO:0000209">
    <property type="term" value="P:protein polyubiquitination"/>
    <property type="evidence" value="ECO:0000314"/>
    <property type="project" value="UniProtKB"/>
</dbReference>
<dbReference type="GO" id="GO:0050821">
    <property type="term" value="P:protein stabilization"/>
    <property type="evidence" value="ECO:0000314"/>
    <property type="project" value="BHF-UCL"/>
</dbReference>
<dbReference type="GO" id="GO:0016925">
    <property type="term" value="P:protein sumoylation"/>
    <property type="evidence" value="ECO:0000304"/>
    <property type="project" value="Reactome"/>
</dbReference>
<dbReference type="GO" id="GO:0051726">
    <property type="term" value="P:regulation of cell cycle"/>
    <property type="evidence" value="ECO:0000314"/>
    <property type="project" value="BHF-UCL"/>
</dbReference>
<dbReference type="GO" id="GO:0046825">
    <property type="term" value="P:regulation of protein export from nucleus"/>
    <property type="evidence" value="ECO:0000315"/>
    <property type="project" value="BHF-UCL"/>
</dbReference>
<dbReference type="GO" id="GO:0031647">
    <property type="term" value="P:regulation of protein stability"/>
    <property type="evidence" value="ECO:0000270"/>
    <property type="project" value="DisProt"/>
</dbReference>
<dbReference type="GO" id="GO:1903214">
    <property type="term" value="P:regulation of protein targeting to mitochondrion"/>
    <property type="evidence" value="ECO:0000315"/>
    <property type="project" value="ParkinsonsUK-UCL"/>
</dbReference>
<dbReference type="GO" id="GO:0006364">
    <property type="term" value="P:rRNA processing"/>
    <property type="evidence" value="ECO:0007669"/>
    <property type="project" value="UniProtKB-KW"/>
</dbReference>
<dbReference type="GO" id="GO:0048103">
    <property type="term" value="P:somatic stem cell division"/>
    <property type="evidence" value="ECO:0000250"/>
    <property type="project" value="BHF-UCL"/>
</dbReference>
<dbReference type="DisProt" id="DP02167">
    <molecule id="Q8N726-1"/>
</dbReference>
<dbReference type="InterPro" id="IPR010868">
    <property type="entry name" value="Tumor_suppres_ARF"/>
</dbReference>
<dbReference type="Pfam" id="PF07392">
    <property type="entry name" value="P19Arf_N"/>
    <property type="match status" value="1"/>
</dbReference>
<reference evidence="29" key="1">
    <citation type="journal article" date="1995" name="Cancer Res.">
        <title>Complex structure and regulation of the P16 (MTS1) locus.</title>
        <authorList>
            <person name="Stone S."/>
            <person name="Jiang P."/>
            <person name="Dayananth P."/>
            <person name="Tavtigian S.V."/>
            <person name="Katcher H."/>
            <person name="Parry D."/>
            <person name="Peters G."/>
            <person name="Kamb A."/>
        </authorList>
    </citation>
    <scope>NUCLEOTIDE SEQUENCE [MRNA]</scope>
</reference>
<reference evidence="26 28" key="2">
    <citation type="submission" date="1995-10" db="EMBL/GenBank/DDBJ databases">
        <title>mRNA isoform with alternate first exon-encoded sequences at the cyclin-dependent kinase inhibitor 2 (p16INK4/MTS1) locus and mapping analysis of the region by using long-PCR.</title>
        <authorList>
            <person name="Linnenbach A.J."/>
        </authorList>
    </citation>
    <scope>NUCLEOTIDE SEQUENCE [MRNA]</scope>
</reference>
<reference evidence="26 28" key="3">
    <citation type="submission" date="2002-07" db="EMBL/GenBank/DDBJ databases">
        <authorList>
            <consortium name="NIEHS SNPs program"/>
        </authorList>
    </citation>
    <scope>NUCLEOTIDE SEQUENCE [GENOMIC DNA]</scope>
    <scope>VARIANT SER-17</scope>
</reference>
<reference evidence="31" key="4">
    <citation type="journal article" date="2004" name="Nature">
        <title>DNA sequence and analysis of human chromosome 9.</title>
        <authorList>
            <person name="Humphray S.J."/>
            <person name="Oliver K."/>
            <person name="Hunt A.R."/>
            <person name="Plumb R.W."/>
            <person name="Loveland J.E."/>
            <person name="Howe K.L."/>
            <person name="Andrews T.D."/>
            <person name="Searle S."/>
            <person name="Hunt S.E."/>
            <person name="Scott C.E."/>
            <person name="Jones M.C."/>
            <person name="Ainscough R."/>
            <person name="Almeida J.P."/>
            <person name="Ambrose K.D."/>
            <person name="Ashwell R.I.S."/>
            <person name="Babbage A.K."/>
            <person name="Babbage S."/>
            <person name="Bagguley C.L."/>
            <person name="Bailey J."/>
            <person name="Banerjee R."/>
            <person name="Barker D.J."/>
            <person name="Barlow K.F."/>
            <person name="Bates K."/>
            <person name="Beasley H."/>
            <person name="Beasley O."/>
            <person name="Bird C.P."/>
            <person name="Bray-Allen S."/>
            <person name="Brown A.J."/>
            <person name="Brown J.Y."/>
            <person name="Burford D."/>
            <person name="Burrill W."/>
            <person name="Burton J."/>
            <person name="Carder C."/>
            <person name="Carter N.P."/>
            <person name="Chapman J.C."/>
            <person name="Chen Y."/>
            <person name="Clarke G."/>
            <person name="Clark S.Y."/>
            <person name="Clee C.M."/>
            <person name="Clegg S."/>
            <person name="Collier R.E."/>
            <person name="Corby N."/>
            <person name="Crosier M."/>
            <person name="Cummings A.T."/>
            <person name="Davies J."/>
            <person name="Dhami P."/>
            <person name="Dunn M."/>
            <person name="Dutta I."/>
            <person name="Dyer L.W."/>
            <person name="Earthrowl M.E."/>
            <person name="Faulkner L."/>
            <person name="Fleming C.J."/>
            <person name="Frankish A."/>
            <person name="Frankland J.A."/>
            <person name="French L."/>
            <person name="Fricker D.G."/>
            <person name="Garner P."/>
            <person name="Garnett J."/>
            <person name="Ghori J."/>
            <person name="Gilbert J.G.R."/>
            <person name="Glison C."/>
            <person name="Grafham D.V."/>
            <person name="Gribble S."/>
            <person name="Griffiths C."/>
            <person name="Griffiths-Jones S."/>
            <person name="Grocock R."/>
            <person name="Guy J."/>
            <person name="Hall R.E."/>
            <person name="Hammond S."/>
            <person name="Harley J.L."/>
            <person name="Harrison E.S.I."/>
            <person name="Hart E.A."/>
            <person name="Heath P.D."/>
            <person name="Henderson C.D."/>
            <person name="Hopkins B.L."/>
            <person name="Howard P.J."/>
            <person name="Howden P.J."/>
            <person name="Huckle E."/>
            <person name="Johnson C."/>
            <person name="Johnson D."/>
            <person name="Joy A.A."/>
            <person name="Kay M."/>
            <person name="Keenan S."/>
            <person name="Kershaw J.K."/>
            <person name="Kimberley A.M."/>
            <person name="King A."/>
            <person name="Knights A."/>
            <person name="Laird G.K."/>
            <person name="Langford C."/>
            <person name="Lawlor S."/>
            <person name="Leongamornlert D.A."/>
            <person name="Leversha M."/>
            <person name="Lloyd C."/>
            <person name="Lloyd D.M."/>
            <person name="Lovell J."/>
            <person name="Martin S."/>
            <person name="Mashreghi-Mohammadi M."/>
            <person name="Matthews L."/>
            <person name="McLaren S."/>
            <person name="McLay K.E."/>
            <person name="McMurray A."/>
            <person name="Milne S."/>
            <person name="Nickerson T."/>
            <person name="Nisbett J."/>
            <person name="Nordsiek G."/>
            <person name="Pearce A.V."/>
            <person name="Peck A.I."/>
            <person name="Porter K.M."/>
            <person name="Pandian R."/>
            <person name="Pelan S."/>
            <person name="Phillimore B."/>
            <person name="Povey S."/>
            <person name="Ramsey Y."/>
            <person name="Rand V."/>
            <person name="Scharfe M."/>
            <person name="Sehra H.K."/>
            <person name="Shownkeen R."/>
            <person name="Sims S.K."/>
            <person name="Skuce C.D."/>
            <person name="Smith M."/>
            <person name="Steward C.A."/>
            <person name="Swarbreck D."/>
            <person name="Sycamore N."/>
            <person name="Tester J."/>
            <person name="Thorpe A."/>
            <person name="Tracey A."/>
            <person name="Tromans A."/>
            <person name="Thomas D.W."/>
            <person name="Wall M."/>
            <person name="Wallis J.M."/>
            <person name="West A.P."/>
            <person name="Whitehead S.L."/>
            <person name="Willey D.L."/>
            <person name="Williams S.A."/>
            <person name="Wilming L."/>
            <person name="Wray P.W."/>
            <person name="Young L."/>
            <person name="Ashurst J.L."/>
            <person name="Coulson A."/>
            <person name="Blocker H."/>
            <person name="Durbin R.M."/>
            <person name="Sulston J.E."/>
            <person name="Hubbard T."/>
            <person name="Jackson M.J."/>
            <person name="Bentley D.R."/>
            <person name="Beck S."/>
            <person name="Rogers J."/>
            <person name="Dunham I."/>
        </authorList>
    </citation>
    <scope>NUCLEOTIDE SEQUENCE [LARGE SCALE GENOMIC DNA]</scope>
</reference>
<reference evidence="26 28" key="5">
    <citation type="submission" date="2005-09" db="EMBL/GenBank/DDBJ databases">
        <authorList>
            <person name="Mural R.J."/>
            <person name="Istrail S."/>
            <person name="Sutton G.G."/>
            <person name="Florea L."/>
            <person name="Halpern A.L."/>
            <person name="Mobarry C.M."/>
            <person name="Lippert R."/>
            <person name="Walenz B."/>
            <person name="Shatkay H."/>
            <person name="Dew I."/>
            <person name="Miller J.R."/>
            <person name="Flanigan M.J."/>
            <person name="Edwards N.J."/>
            <person name="Bolanos R."/>
            <person name="Fasulo D."/>
            <person name="Halldorsson B.V."/>
            <person name="Hannenhalli S."/>
            <person name="Turner R."/>
            <person name="Yooseph S."/>
            <person name="Lu F."/>
            <person name="Nusskern D.R."/>
            <person name="Shue B.C."/>
            <person name="Zheng X.H."/>
            <person name="Zhong F."/>
            <person name="Delcher A.L."/>
            <person name="Huson D.H."/>
            <person name="Kravitz S.A."/>
            <person name="Mouchard L."/>
            <person name="Reinert K."/>
            <person name="Remington K.A."/>
            <person name="Clark A.G."/>
            <person name="Waterman M.S."/>
            <person name="Eichler E.E."/>
            <person name="Adams M.D."/>
            <person name="Hunkapiller M.W."/>
            <person name="Myers E.W."/>
            <person name="Venter J.C."/>
        </authorList>
    </citation>
    <scope>NUCLEOTIDE SEQUENCE [LARGE SCALE GENOMIC DNA]</scope>
</reference>
<reference key="6">
    <citation type="journal article" date="2004" name="Genome Res.">
        <title>The status, quality, and expansion of the NIH full-length cDNA project: the Mammalian Gene Collection (MGC).</title>
        <authorList>
            <consortium name="The MGC Project Team"/>
        </authorList>
    </citation>
    <scope>NUCLEOTIDE SEQUENCE [LARGE SCALE MRNA]</scope>
    <source>
        <tissue>Skin</tissue>
    </source>
</reference>
<reference evidence="26 27" key="7">
    <citation type="journal article" date="1995" name="Oncogene">
        <title>A new type of p16INK4/MTS1 gene transcript expressed in B-cell malignancies.</title>
        <authorList>
            <person name="Duro D."/>
            <person name="Bernard O."/>
            <person name="Della Valle V."/>
            <person name="Berger R."/>
            <person name="Larsen C.J."/>
        </authorList>
    </citation>
    <scope>NUCLEOTIDE SEQUENCE [MRNA]</scope>
    <source>
        <tissue evidence="27">Hematopoietic</tissue>
    </source>
</reference>
<reference evidence="26 28" key="8">
    <citation type="submission" date="2003-05" db="EMBL/GenBank/DDBJ databases">
        <title>Cloning of human full-length CDSs in BD Creator(TM) system donor vector.</title>
        <authorList>
            <person name="Kalnine N."/>
            <person name="Chen X."/>
            <person name="Rolfs A."/>
            <person name="Halleck A."/>
            <person name="Hines L."/>
            <person name="Eisenstein S."/>
            <person name="Koundinya M."/>
            <person name="Raphael J."/>
            <person name="Moreira D."/>
            <person name="Kelley T."/>
            <person name="LaBaer J."/>
            <person name="Lin Y."/>
            <person name="Phelan M."/>
            <person name="Farmer A."/>
        </authorList>
    </citation>
    <scope>NUCLEOTIDE SEQUENCE [LARGE SCALE MRNA]</scope>
</reference>
<reference evidence="26" key="9">
    <citation type="journal article" date="1998" name="EMBO J.">
        <title>The alternative product from the human CDKN2A locus, p14(ARF), participates in a regulatory feedback loop with p53 and MDM2.</title>
        <authorList>
            <person name="Stott F.J."/>
            <person name="Bates S."/>
            <person name="James M.C."/>
            <person name="McConnell B.B."/>
            <person name="Starborg M."/>
            <person name="Brookes S."/>
            <person name="Palmero I."/>
            <person name="Ryan K."/>
            <person name="Hara E."/>
            <person name="Vousden K.H."/>
            <person name="Peters G."/>
        </authorList>
    </citation>
    <scope>FUNCTION</scope>
    <scope>INTERACTION WITH MDM2</scope>
</reference>
<reference evidence="26" key="10">
    <citation type="journal article" date="2001" name="Oncogene">
        <title>Human ARF protein interacts with topoisomerase I and stimulates its activity.</title>
        <authorList>
            <person name="Karayan L."/>
            <person name="Riou J.-F."/>
            <person name="Seite P."/>
            <person name="Migeon J."/>
            <person name="Cantereau A."/>
            <person name="Larsen C.-J."/>
        </authorList>
    </citation>
    <scope>FUNCTION</scope>
    <scope>INTERACTION WITH TOP1</scope>
</reference>
<reference evidence="26" key="11">
    <citation type="journal article" date="2001" name="Oncogene">
        <title>Human ARF binds E2F1 and inhibits its transcriptional activity.</title>
        <authorList>
            <person name="Eymin B."/>
            <person name="Karayan L."/>
            <person name="Seite P."/>
            <person name="Brambilla C."/>
            <person name="Brambilla E."/>
            <person name="Larsen C.-J."/>
            <person name="Gazzeri S."/>
        </authorList>
    </citation>
    <scope>FUNCTION</scope>
    <scope>INTERACTION WITH E2F1</scope>
</reference>
<reference key="12">
    <citation type="journal article" date="2002" name="J. Biol. Chem.">
        <title>CARF is a novel protein that cooperates with mouse p19ARF (human p14ARF) in activating p53.</title>
        <authorList>
            <person name="Hasan M.K."/>
            <person name="Yaguchi T."/>
            <person name="Sugihara T."/>
            <person name="Kumar P.K.R."/>
            <person name="Taira K."/>
            <person name="Reddel R.R."/>
            <person name="Kaul S.C."/>
            <person name="Wadhwa R."/>
        </authorList>
    </citation>
    <scope>INTERACTION WITH CDKN2AIP</scope>
</reference>
<reference key="13">
    <citation type="journal article" date="2003" name="Exp. Gerontol.">
        <title>A novel putative collaborator of p19ARF.</title>
        <authorList>
            <person name="Wadhwa R."/>
            <person name="Sugihara T."/>
            <person name="Hasan M.K."/>
            <person name="Duncan E.L."/>
            <person name="Taira K."/>
            <person name="Kaul S.C."/>
        </authorList>
    </citation>
    <scope>INTERACTION WITH CDKN2AIP</scope>
</reference>
<reference key="14">
    <citation type="journal article" date="2003" name="J. Biol. Chem.">
        <title>Association of p14ARF with the p120E4F transcriptional repressor enhances cell cycle inhibition.</title>
        <authorList>
            <person name="Rizos H."/>
            <person name="Diefenbach E."/>
            <person name="Badhwar P."/>
            <person name="Woodruff S."/>
            <person name="Becker T.M."/>
            <person name="Rooney R.J."/>
            <person name="Kefford R.F."/>
        </authorList>
    </citation>
    <scope>INTERACTION WITH E4F1</scope>
</reference>
<reference evidence="26" key="15">
    <citation type="journal article" date="2003" name="Mol. Cell">
        <title>Tumor suppressor ARF degrades B23, a nucleolar protein involved in ribosome biogenesis and cell proliferation.</title>
        <authorList>
            <person name="Itahana K."/>
            <person name="Bhat K.P."/>
            <person name="Jin A."/>
            <person name="Itahana Y."/>
            <person name="Hawke D."/>
            <person name="Kobayashi R."/>
            <person name="Zhang Y."/>
        </authorList>
    </citation>
    <scope>FUNCTION</scope>
    <scope>INTERACTION WITH NPM1</scope>
</reference>
<reference evidence="26" key="16">
    <citation type="journal article" date="2003" name="Oncogene">
        <title>p14ARF induces G2 arrest and apoptosis independently of p53 leading to regression of tumours established in nude mice.</title>
        <authorList>
            <person name="Eymin B."/>
            <person name="Leduc C."/>
            <person name="Coll J.-L."/>
            <person name="Brambilla E."/>
            <person name="Gazzeri S."/>
        </authorList>
    </citation>
    <scope>FUNCTION</scope>
</reference>
<reference evidence="26" key="17">
    <citation type="journal article" date="2004" name="Oncogene">
        <title>Human Arf tumor suppressor specifically interacts with chromatin containing the promoter of rRNA genes.</title>
        <authorList>
            <person name="Ayrault O."/>
            <person name="Andrique L."/>
            <person name="Larsen C.-J."/>
            <person name="Seite P."/>
        </authorList>
    </citation>
    <scope>FUNCTION</scope>
    <scope>INTERACTION WITH TOP1</scope>
</reference>
<reference evidence="26" key="18">
    <citation type="journal article" date="2005" name="Biochem. Biophys. Res. Commun.">
        <title>The ARF tumor suppressor inhibits BCL6-mediated transcriptional repression.</title>
        <authorList>
            <person name="Suzuki H."/>
            <person name="Kurita M."/>
            <person name="Mizumoto K."/>
            <person name="Moriyama M."/>
            <person name="Aiso S."/>
            <person name="Nishimoto I."/>
            <person name="Matsuoka M."/>
        </authorList>
    </citation>
    <scope>FUNCTION</scope>
    <scope>INTERACTION WITH BCL6</scope>
</reference>
<reference evidence="26" key="19">
    <citation type="journal article" date="2005" name="Cell">
        <title>ARF-BP1/Mule is a critical mediator of the ARF tumor suppressor.</title>
        <authorList>
            <person name="Chen D."/>
            <person name="Kon N."/>
            <person name="Li M."/>
            <person name="Zhang W."/>
            <person name="Qin J."/>
            <person name="Gu W."/>
        </authorList>
    </citation>
    <scope>FUNCTION</scope>
    <scope>INTERACTION WITH HUWE1</scope>
</reference>
<reference evidence="26" key="20">
    <citation type="journal article" date="2005" name="Cell Cycle">
        <title>p14ARF interacts with the SUMO-conjugating enzyme Ubc9 and promotes the sumoylation of its binding partners.</title>
        <authorList>
            <person name="Rizos H."/>
            <person name="Woodruff S."/>
            <person name="Kefford R.F."/>
        </authorList>
    </citation>
    <scope>FUNCTION</scope>
    <scope>INTERACTION WITH UBE2I</scope>
</reference>
<reference key="21">
    <citation type="journal article" date="2006" name="Biochem. J.">
        <title>A novel ARF-binding protein (LZAP) alters ARF regulation of HDM2.</title>
        <authorList>
            <person name="Wang J."/>
            <person name="He X."/>
            <person name="Luo Y."/>
            <person name="Yarbrough W.G."/>
        </authorList>
    </citation>
    <scope>INTERACTION WITH CDK5RAP3 AND MDM2</scope>
    <scope>SUBCELLULAR LOCATION</scope>
    <scope>REGION</scope>
</reference>
<reference key="22">
    <citation type="journal article" date="2006" name="Mol. Cell">
        <title>A short mitochondrial form of p19ARF induces autophagy and caspase-independent cell death.</title>
        <authorList>
            <person name="Reef S."/>
            <person name="Zalckvar E."/>
            <person name="Shifman O."/>
            <person name="Bialik S."/>
            <person name="Sabanay H."/>
            <person name="Oren M."/>
            <person name="Kimchi A."/>
        </authorList>
    </citation>
    <scope>FUNCTION (ISOFORM SMARF)</scope>
    <scope>ALTERNATIVE SPLICING (ISOFORM SMARF)</scope>
    <scope>SUBCELLULAR LOCATION (ISOFORM SMARF)</scope>
</reference>
<reference key="23">
    <citation type="journal article" date="2007" name="J. Biol. Chem.">
        <title>A novel nuclear interactor of ARF and MDM2 (NIAM) that maintains chromosomal stability.</title>
        <authorList>
            <person name="Tompkins V.S."/>
            <person name="Hagen J."/>
            <person name="Frazier A.A."/>
            <person name="Lushnikova T."/>
            <person name="Fitzgerald M.P."/>
            <person name="di Tommaso A.D."/>
            <person name="Ladeveze V."/>
            <person name="Domann F.E."/>
            <person name="Eischen C.M."/>
            <person name="Quelle D.E."/>
        </authorList>
    </citation>
    <scope>INTERACTION WITH TBRG1</scope>
</reference>
<reference key="24">
    <citation type="journal article" date="2007" name="Oncogene">
        <title>The autophagic inducer smARF interacts with and is stabilized by the mitochondrial p32 protein.</title>
        <authorList>
            <person name="Reef S."/>
            <person name="Shifman O."/>
            <person name="Oren M."/>
            <person name="Kimchi A."/>
        </authorList>
    </citation>
    <scope>INTERACTION WITH C1QBP</scope>
</reference>
<reference key="25">
    <citation type="journal article" date="2008" name="J. Biol. Chem.">
        <title>Tumor suppressor ARF promotes non-classic proteasome-independent polyubiquitination of COMMD1.</title>
        <authorList>
            <person name="Huang Y."/>
            <person name="Wu M."/>
            <person name="Li H.Y."/>
        </authorList>
    </citation>
    <scope>INTERACTION WITH COMMD1</scope>
    <scope>FUNCTION</scope>
    <scope>SUBCELLULAR LOCATION</scope>
</reference>
<reference key="26">
    <citation type="journal article" date="2010" name="Nature">
        <title>Transcription-independent ARF regulation in oncogenic stress-mediated p53 responses.</title>
        <authorList>
            <person name="Chen D."/>
            <person name="Shan J."/>
            <person name="Zhu W.G."/>
            <person name="Qin J."/>
            <person name="Gu W."/>
        </authorList>
    </citation>
    <scope>UBIQUITINATION BY TRIP12</scope>
</reference>
<reference key="27">
    <citation type="journal article" date="2012" name="Exp. Cell Res.">
        <title>A novel proapoptotic gene PANO encodes a post-translational modulator of the tumor suppressor p14ARF.</title>
        <authorList>
            <person name="Watari A."/>
            <person name="Li Y."/>
            <person name="Higashiyama S."/>
            <person name="Yutsudo M."/>
        </authorList>
    </citation>
    <scope>FUNCTION</scope>
    <scope>SUBCELLULAR LOCATION</scope>
</reference>
<reference key="28">
    <citation type="journal article" date="2017" name="Oncotarget">
        <title>GLTSCR2 promotes the nucleoplasmic translocation and subsequent degradation of nucleolar ARF.</title>
        <authorList>
            <person name="Lee S."/>
            <person name="Cho Y.E."/>
            <person name="Kim S.H."/>
            <person name="Kim Y.J."/>
            <person name="Park J.H."/>
        </authorList>
    </citation>
    <scope>INTERACTION WITH NOP53</scope>
    <scope>SUBCELLULAR LOCATION</scope>
    <scope>UBIQUITINATION</scope>
</reference>
<comment type="function">
    <text evidence="1 3 4 8 9 10 11 12 13 15 18 20 22">Capable of inducing cell cycle arrest in G1 and G2 phases. Acts as a tumor suppressor. Binds to MDM2 and blocks its nucleocytoplasmic shuttling by sequestering it in the nucleolus. This inhibits the oncogenic action of MDM2 by blocking MDM2-induced degradation of p53 and enhancing p53-dependent transactivation and apoptosis. Also induces G2 arrest and apoptosis in a p53-independent manner by preventing the activation of cyclin B1/CDC2 complexes. Binds to BCL6 and down-regulates BCL6-induced transcriptional repression. Binds to E2F1 and MYC and blocks their transcriptional activator activity but has no effect on MYC transcriptional repression. Binds to TOP1/TOPOI and stimulates its activity. This complex binds to rRNA gene promoters and may play a role in rRNA transcription and/or maturation. Interacts with NPM1/B23 and promotes its polyubiquitination and degradation, thus inhibiting rRNA processing. Plays a role in inhibiting ribosome biogenesis, perhaps by binding to the nucleolar localization sequence of transcription termination factor TTF1, and thereby preventing nucleolar localization of TTF1 (By similarity). Interacts with COMMD1 and promotes its 'Lys63'-linked polyubiquitination. Interacts with UBE2I/UBC9 and enhances sumoylation of a number of its binding partners including MDM2 and E2F1. Binds to HUWE1 and represses its ubiquitin ligase activity. May play a role in controlling cell proliferation and apoptosis during mammary gland development.</text>
</comment>
<comment type="function">
    <molecule>Isoform smARF</molecule>
    <text evidence="15">May be involved in regulation of autophagy and caspase-independent cell death; the short-lived mitochondrial isoform is stabilized by C1QBP.</text>
</comment>
<comment type="subunit">
    <text evidence="1 3 4 5 6 7 9 10 11 12 13 14 16 17 18 21 22">Does not interact with cyclins, CDK1, CDK2, CDK4, CDK5 or CDK6. Binds to BCL6, E2F1, HUWE1, MDM2, MYC, NPM1/B23, TOP1/TOPOI and UBE2I/UBC9. Interacts with TBRG1 and COMMD1. Interacts with CDKN2AIP and E4F1. Interacts with CDK5RAP3 and MDM2; form a ternary complex involved in regulation of p53/TP53 (PubMed:16173922). Interacts with NOP53; the interaction is direct and promotes ARF nucleoplasmic relocalization and ubiquitin-mediated proteasomal degradation (PubMed:27323397). Interacts with TTF1 (via the N-terminal region (NRD) and a C-terminal region); the interaction is direct and inhibits the nucleolar localization of TTF1 (By similarity).</text>
</comment>
<comment type="subunit">
    <molecule>Isoform smARF</molecule>
    <text evidence="15">Interacts with C1QBP.</text>
</comment>
<comment type="interaction">
    <interactant intactId="EBI-625922">
        <id>Q8N726</id>
    </interactant>
    <interactant intactId="EBI-347528">
        <id>Q07021</id>
        <label>C1QBP</label>
    </interactant>
    <organismsDiffer>false</organismsDiffer>
    <experiments>3</experiments>
</comment>
<comment type="interaction">
    <interactant intactId="EBI-625922">
        <id>Q8N726</id>
    </interactant>
    <interactant intactId="EBI-77321">
        <id>Q9UER7</id>
        <label>DAXX</label>
    </interactant>
    <organismsDiffer>false</organismsDiffer>
    <experiments>8</experiments>
</comment>
<comment type="interaction">
    <interactant intactId="EBI-625922">
        <id>Q8N726</id>
    </interactant>
    <interactant intactId="EBI-2834611">
        <id>P18146</id>
        <label>EGR1</label>
    </interactant>
    <organismsDiffer>false</organismsDiffer>
    <experiments>4</experiments>
</comment>
<comment type="interaction">
    <interactant intactId="EBI-625922">
        <id>Q8N726</id>
    </interactant>
    <interactant intactId="EBI-625934">
        <id>Q7Z6Z7</id>
        <label>HUWE1</label>
    </interactant>
    <organismsDiffer>false</organismsDiffer>
    <experiments>5</experiments>
</comment>
<comment type="interaction">
    <interactant intactId="EBI-625922">
        <id>Q8N726</id>
    </interactant>
    <interactant intactId="EBI-389668">
        <id>Q00987</id>
        <label>MDM2</label>
    </interactant>
    <organismsDiffer>false</organismsDiffer>
    <experiments>5</experiments>
</comment>
<comment type="interaction">
    <interactant intactId="EBI-625922">
        <id>Q8N726</id>
    </interactant>
    <interactant intactId="EBI-714236">
        <id>Q13330</id>
        <label>MTA1</label>
    </interactant>
    <organismsDiffer>false</organismsDiffer>
    <experiments>2</experiments>
</comment>
<comment type="interaction">
    <interactant intactId="EBI-625922">
        <id>Q8N726</id>
    </interactant>
    <interactant intactId="EBI-878369">
        <id>P04198</id>
        <label>MYCN</label>
    </interactant>
    <organismsDiffer>false</organismsDiffer>
    <experiments>3</experiments>
</comment>
<comment type="interaction">
    <interactant intactId="EBI-625922">
        <id>Q8N726</id>
    </interactant>
    <interactant intactId="EBI-78579">
        <id>P06748</id>
        <label>NPM1</label>
    </interactant>
    <organismsDiffer>false</organismsDiffer>
    <experiments>2</experiments>
</comment>
<comment type="interaction">
    <interactant intactId="EBI-625922">
        <id>Q8N726</id>
    </interactant>
    <interactant intactId="EBI-298336">
        <id>P08047</id>
        <label>SP1</label>
    </interactant>
    <organismsDiffer>false</organismsDiffer>
    <experiments>4</experiments>
</comment>
<comment type="interaction">
    <interactant intactId="EBI-625922">
        <id>Q8N726</id>
    </interactant>
    <interactant intactId="EBI-308443">
        <id>Q14669</id>
        <label>TRIP12</label>
    </interactant>
    <organismsDiffer>false</organismsDiffer>
    <experiments>4</experiments>
</comment>
<comment type="interaction">
    <interactant intactId="EBI-625922">
        <id>Q8N726</id>
    </interactant>
    <interactant intactId="EBI-3923307">
        <id>Q8TAQ5</id>
        <label>ZNF420</label>
    </interactant>
    <organismsDiffer>false</organismsDiffer>
    <experiments>8</experiments>
</comment>
<comment type="interaction">
    <interactant intactId="EBI-625922">
        <id>Q8N726</id>
    </interactant>
    <interactant intactId="EBI-1185167">
        <id>Q8AZK7</id>
        <label>EBNA-LP</label>
    </interactant>
    <organismsDiffer>true</organismsDiffer>
    <experiments>5</experiments>
</comment>
<comment type="subcellular location">
    <subcellularLocation>
        <location evidence="14 18 20 21">Nucleus</location>
        <location evidence="14 18 20 21">Nucleolus</location>
    </subcellularLocation>
    <subcellularLocation>
        <location evidence="18 21">Nucleus</location>
        <location evidence="18 21">Nucleoplasm</location>
    </subcellularLocation>
</comment>
<comment type="subcellular location">
    <molecule>Isoform smARF</molecule>
    <subcellularLocation>
        <location evidence="15">Mitochondrion</location>
    </subcellularLocation>
</comment>
<comment type="alternative products">
    <event type="alternative splicing"/>
    <isoform>
        <id>Q8N726-1</id>
        <name evidence="24">tumor suppressor ARF</name>
        <name evidence="25">p14ARF</name>
        <name>p19ARF</name>
        <sequence type="displayed"/>
    </isoform>
    <isoform>
        <id>P42771-1</id>
        <name evidence="26">1</name>
        <name evidence="26">p16INK4a</name>
        <sequence type="external"/>
    </isoform>
    <isoform>
        <id>P42771-2</id>
        <name evidence="26">2</name>
        <sequence type="external"/>
    </isoform>
    <isoform>
        <id>P42771-3</id>
        <name evidence="26">3</name>
        <name evidence="26">p12</name>
        <sequence type="external"/>
    </isoform>
    <isoform>
        <id>P42771-4</id>
        <name>5</name>
        <name>p16gamma</name>
        <sequence type="external"/>
    </isoform>
    <isoform>
        <id>Q8N726-2</id>
        <name>smARF</name>
        <sequence type="described" ref="VSP_044962"/>
    </isoform>
    <text evidence="1">Isoform 1 and isoform tumor suppressor ARF arise due to the use of two alternative first exons joined to a common exon 2 at the same acceptor site but in different reading frames, resulting in two completely different isoforms.</text>
</comment>
<comment type="PTM">
    <text evidence="19 21">Ubiquitinated in normal cells by TRIP12 via the ubiquitin fusion degradation (UFD) pathway, a process that mediates ubiquitination at the N-terminus, regardless of the absence of lysine residues. Ubiquitination leads to its proteasomal degradation. In cancer cells, however, TRIP12 is located in a different cell compartment, preventing ubiquitination and degradation.</text>
</comment>
<comment type="caution">
    <text evidence="26">The proteins described here are encoded by the gene CDKN2A, but are completely unrelated in terms of sequence and function to cyclin-dependent kinase inhibitor 2A (AC P42771) which is encoded by the same gene.</text>
</comment>
<comment type="sequence caution" evidence="26">
    <conflict type="erroneous initiation">
        <sequence resource="EMBL-CDS" id="AAB01737"/>
    </conflict>
    <text>Extended N-terminus.</text>
</comment>
<comment type="sequence caution" evidence="26">
    <conflict type="erroneous initiation">
        <sequence resource="EMBL-CDS" id="AAC60649"/>
    </conflict>
    <text>Extended N-terminus.</text>
</comment>
<comment type="sequence caution" evidence="26">
    <conflict type="erroneous initiation">
        <sequence resource="EMBL-CDS" id="AAH15960"/>
    </conflict>
    <text>Extended N-terminus.</text>
</comment>
<comment type="sequence caution" evidence="26">
    <conflict type="erroneous initiation">
        <sequence resource="EMBL-CDS" id="AAH21998"/>
    </conflict>
    <text>Extended N-terminus.</text>
</comment>
<comment type="sequence caution" evidence="26">
    <conflict type="erroneous initiation">
        <sequence resource="EMBL-CDS" id="AAM77919"/>
    </conflict>
    <text>Extended N-terminus.</text>
</comment>
<comment type="sequence caution" evidence="26">
    <conflict type="erroneous initiation">
        <sequence resource="EMBL-CDS" id="CAH70601"/>
    </conflict>
    <text>Extended N-terminus.</text>
</comment>
<comment type="sequence caution" evidence="26">
    <conflict type="erroneous initiation">
        <sequence resource="EMBL-CDS" id="EAW58600"/>
    </conflict>
    <text>Extended N-terminus.</text>
</comment>
<comment type="sequence caution" evidence="26">
    <conflict type="erroneous initiation">
        <sequence resource="EMBL-CDS" id="EAW58601"/>
    </conflict>
    <text>Extended N-terminus.</text>
</comment>
<comment type="online information" name="Atlas of Genetics and Cytogenetics in Oncology and Haematology">
    <link uri="https://atlasgeneticsoncology.org/gene/146/CDKN2a"/>
</comment>
<accession>Q8N726</accession>
<accession>D3DRK2</accession>
<accession>Q13195</accession>
<accession>Q13399</accession>
<accession>Q16360</accession>
<accession>Q7KZR9</accession>
<evidence type="ECO:0000250" key="1">
    <source>
        <dbReference type="UniProtKB" id="Q64364"/>
    </source>
</evidence>
<evidence type="ECO:0000256" key="2">
    <source>
        <dbReference type="SAM" id="MobiDB-lite"/>
    </source>
</evidence>
<evidence type="ECO:0000269" key="3">
    <source>
    </source>
</evidence>
<evidence type="ECO:0000269" key="4">
    <source>
    </source>
</evidence>
<evidence type="ECO:0000269" key="5">
    <source>
    </source>
</evidence>
<evidence type="ECO:0000269" key="6">
    <source>
    </source>
</evidence>
<evidence type="ECO:0000269" key="7">
    <source>
    </source>
</evidence>
<evidence type="ECO:0000269" key="8">
    <source>
    </source>
</evidence>
<evidence type="ECO:0000269" key="9">
    <source>
    </source>
</evidence>
<evidence type="ECO:0000269" key="10">
    <source>
    </source>
</evidence>
<evidence type="ECO:0000269" key="11">
    <source>
    </source>
</evidence>
<evidence type="ECO:0000269" key="12">
    <source>
    </source>
</evidence>
<evidence type="ECO:0000269" key="13">
    <source>
    </source>
</evidence>
<evidence type="ECO:0000269" key="14">
    <source>
    </source>
</evidence>
<evidence type="ECO:0000269" key="15">
    <source>
    </source>
</evidence>
<evidence type="ECO:0000269" key="16">
    <source>
    </source>
</evidence>
<evidence type="ECO:0000269" key="17">
    <source>
    </source>
</evidence>
<evidence type="ECO:0000269" key="18">
    <source>
    </source>
</evidence>
<evidence type="ECO:0000269" key="19">
    <source>
    </source>
</evidence>
<evidence type="ECO:0000269" key="20">
    <source>
    </source>
</evidence>
<evidence type="ECO:0000269" key="21">
    <source>
    </source>
</evidence>
<evidence type="ECO:0000269" key="22">
    <source>
    </source>
</evidence>
<evidence type="ECO:0000269" key="23">
    <source ref="3"/>
</evidence>
<evidence type="ECO:0000303" key="24">
    <source>
    </source>
</evidence>
<evidence type="ECO:0000303" key="25">
    <source>
    </source>
</evidence>
<evidence type="ECO:0000305" key="26"/>
<evidence type="ECO:0000312" key="27">
    <source>
        <dbReference type="EMBL" id="AAA82236.1"/>
    </source>
</evidence>
<evidence type="ECO:0000312" key="28">
    <source>
        <dbReference type="EMBL" id="AAB01737.1"/>
    </source>
</evidence>
<evidence type="ECO:0000312" key="29">
    <source>
        <dbReference type="EMBL" id="AAC60649.1"/>
    </source>
</evidence>
<evidence type="ECO:0000312" key="30">
    <source>
        <dbReference type="EMBL" id="AAM77919.1"/>
    </source>
</evidence>
<evidence type="ECO:0000312" key="31">
    <source>
        <dbReference type="EMBL" id="CAH70601.1"/>
    </source>
</evidence>
<evidence type="ECO:0000312" key="32">
    <source>
        <dbReference type="HGNC" id="HGNC:1787"/>
    </source>
</evidence>